<sequence length="16" mass="1816">EITKFPKDQQNLIGQG</sequence>
<evidence type="ECO:0000269" key="1">
    <source>
    </source>
</evidence>
<evidence type="ECO:0000305" key="2"/>
<accession>P83511</accession>
<protein>
    <recommendedName>
        <fullName>Lectin</fullName>
    </recommendedName>
    <alternativeName>
        <fullName>DRL</fullName>
    </alternativeName>
</protein>
<name>LEC_DELRE</name>
<organism evidence="2">
    <name type="scientific">Delonix regia</name>
    <name type="common">Royal poinciana</name>
    <name type="synonym">Poinciana regia</name>
    <dbReference type="NCBI Taxonomy" id="72433"/>
    <lineage>
        <taxon>Eukaryota</taxon>
        <taxon>Viridiplantae</taxon>
        <taxon>Streptophyta</taxon>
        <taxon>Embryophyta</taxon>
        <taxon>Tracheophyta</taxon>
        <taxon>Spermatophyta</taxon>
        <taxon>Magnoliopsida</taxon>
        <taxon>eudicotyledons</taxon>
        <taxon>Gunneridae</taxon>
        <taxon>Pentapetalae</taxon>
        <taxon>rosids</taxon>
        <taxon>fabids</taxon>
        <taxon>Fabales</taxon>
        <taxon>Fabaceae</taxon>
        <taxon>Caesalpinioideae</taxon>
        <taxon>Peltophorum clade</taxon>
        <taxon>Delonix</taxon>
    </lineage>
</organism>
<proteinExistence type="evidence at protein level"/>
<comment type="function">
    <text evidence="1">Glucose-specific lectin.</text>
</comment>
<comment type="biophysicochemical properties">
    <phDependence>
        <text>Optimum pH is 8.0-9.0.</text>
    </phDependence>
    <temperatureDependence>
        <text>Active up to 60 degrees Celsius.</text>
    </temperatureDependence>
</comment>
<comment type="subunit">
    <text evidence="1">Monomer.</text>
</comment>
<comment type="miscellaneous">
    <text evidence="1">Requires manganese but not calcium ions for cell-agglutinating activity.</text>
</comment>
<comment type="similarity">
    <text evidence="2">Belongs to the leguminous lectin family.</text>
</comment>
<dbReference type="GO" id="GO:0005536">
    <property type="term" value="F:D-glucose binding"/>
    <property type="evidence" value="ECO:0000314"/>
    <property type="project" value="UniProtKB"/>
</dbReference>
<dbReference type="GO" id="GO:0030145">
    <property type="term" value="F:manganese ion binding"/>
    <property type="evidence" value="ECO:0000314"/>
    <property type="project" value="UniProtKB"/>
</dbReference>
<dbReference type="GO" id="GO:0098609">
    <property type="term" value="P:cell-cell adhesion"/>
    <property type="evidence" value="ECO:0000314"/>
    <property type="project" value="UniProtKB"/>
</dbReference>
<reference evidence="2" key="1">
    <citation type="journal article" date="2002" name="J. Protein Chem.">
        <title>Biochemical characterization of a lectin from Delonix regia seeds.</title>
        <authorList>
            <person name="Pando S.C."/>
            <person name="Macedo M.L.R."/>
            <person name="Freire M.G.M."/>
            <person name="Toyama M.H."/>
            <person name="Novello J.C."/>
            <person name="Marangoni S."/>
        </authorList>
    </citation>
    <scope>PROTEIN SEQUENCE</scope>
    <scope>CHARACTERIZATION</scope>
    <source>
        <tissue>Seed</tissue>
    </source>
</reference>
<feature type="chain" id="PRO_0000105096" description="Lectin">
    <location>
        <begin position="1"/>
        <end position="16" status="greater than"/>
    </location>
</feature>
<feature type="non-terminal residue" evidence="2">
    <location>
        <position position="16"/>
    </location>
</feature>
<keyword id="KW-0903">Direct protein sequencing</keyword>
<keyword id="KW-0430">Lectin</keyword>
<keyword id="KW-0464">Manganese</keyword>